<accession>Q5M5R0</accession>
<name>LUXS_STRT2</name>
<protein>
    <recommendedName>
        <fullName evidence="1">S-ribosylhomocysteine lyase</fullName>
        <ecNumber evidence="1">4.4.1.21</ecNumber>
    </recommendedName>
    <alternativeName>
        <fullName evidence="1">AI-2 synthesis protein</fullName>
    </alternativeName>
    <alternativeName>
        <fullName evidence="1">Autoinducer-2 production protein LuxS</fullName>
    </alternativeName>
</protein>
<sequence length="160" mass="17965">MPKDVTVESFELDHTIVKAPYVRLISEEVGPKGDIITNFDIRLIQPNENSIDTGGLHTIEHLLAKLIRQRIDGLIDCSPFGCRTGFHMIMWGKQDPTEIAKVIKSSLEAIANEITWEDVPGTTIESCGNYKDHSLHSAKEWAKLILEQGISDQAFERHTV</sequence>
<keyword id="KW-0071">Autoinducer synthesis</keyword>
<keyword id="KW-0408">Iron</keyword>
<keyword id="KW-0456">Lyase</keyword>
<keyword id="KW-0479">Metal-binding</keyword>
<keyword id="KW-0673">Quorum sensing</keyword>
<keyword id="KW-1185">Reference proteome</keyword>
<organism>
    <name type="scientific">Streptococcus thermophilus (strain ATCC BAA-250 / LMG 18311)</name>
    <dbReference type="NCBI Taxonomy" id="264199"/>
    <lineage>
        <taxon>Bacteria</taxon>
        <taxon>Bacillati</taxon>
        <taxon>Bacillota</taxon>
        <taxon>Bacilli</taxon>
        <taxon>Lactobacillales</taxon>
        <taxon>Streptococcaceae</taxon>
        <taxon>Streptococcus</taxon>
    </lineage>
</organism>
<gene>
    <name evidence="1" type="primary">luxS</name>
    <name type="ordered locus">stu0394</name>
</gene>
<evidence type="ECO:0000255" key="1">
    <source>
        <dbReference type="HAMAP-Rule" id="MF_00091"/>
    </source>
</evidence>
<feature type="chain" id="PRO_0000298051" description="S-ribosylhomocysteine lyase">
    <location>
        <begin position="1"/>
        <end position="160"/>
    </location>
</feature>
<feature type="binding site" evidence="1">
    <location>
        <position position="57"/>
    </location>
    <ligand>
        <name>Fe cation</name>
        <dbReference type="ChEBI" id="CHEBI:24875"/>
    </ligand>
</feature>
<feature type="binding site" evidence="1">
    <location>
        <position position="61"/>
    </location>
    <ligand>
        <name>Fe cation</name>
        <dbReference type="ChEBI" id="CHEBI:24875"/>
    </ligand>
</feature>
<feature type="binding site" evidence="1">
    <location>
        <position position="127"/>
    </location>
    <ligand>
        <name>Fe cation</name>
        <dbReference type="ChEBI" id="CHEBI:24875"/>
    </ligand>
</feature>
<comment type="function">
    <text evidence="1">Involved in the synthesis of autoinducer 2 (AI-2) which is secreted by bacteria and is used to communicate both the cell density and the metabolic potential of the environment. The regulation of gene expression in response to changes in cell density is called quorum sensing. Catalyzes the transformation of S-ribosylhomocysteine (RHC) to homocysteine (HC) and 4,5-dihydroxy-2,3-pentadione (DPD).</text>
</comment>
<comment type="catalytic activity">
    <reaction evidence="1">
        <text>S-(5-deoxy-D-ribos-5-yl)-L-homocysteine = (S)-4,5-dihydroxypentane-2,3-dione + L-homocysteine</text>
        <dbReference type="Rhea" id="RHEA:17753"/>
        <dbReference type="ChEBI" id="CHEBI:29484"/>
        <dbReference type="ChEBI" id="CHEBI:58195"/>
        <dbReference type="ChEBI" id="CHEBI:58199"/>
        <dbReference type="EC" id="4.4.1.21"/>
    </reaction>
</comment>
<comment type="cofactor">
    <cofactor evidence="1">
        <name>Fe cation</name>
        <dbReference type="ChEBI" id="CHEBI:24875"/>
    </cofactor>
    <text evidence="1">Binds 1 Fe cation per subunit.</text>
</comment>
<comment type="subunit">
    <text evidence="1">Homodimer.</text>
</comment>
<comment type="similarity">
    <text evidence="1">Belongs to the LuxS family.</text>
</comment>
<dbReference type="EC" id="4.4.1.21" evidence="1"/>
<dbReference type="EMBL" id="CP000023">
    <property type="protein sequence ID" value="AAV60112.1"/>
    <property type="molecule type" value="Genomic_DNA"/>
</dbReference>
<dbReference type="RefSeq" id="WP_002885585.1">
    <property type="nucleotide sequence ID" value="NC_006448.1"/>
</dbReference>
<dbReference type="SMR" id="Q5M5R0"/>
<dbReference type="STRING" id="264199.stu0394"/>
<dbReference type="KEGG" id="stl:stu0394"/>
<dbReference type="eggNOG" id="COG1854">
    <property type="taxonomic scope" value="Bacteria"/>
</dbReference>
<dbReference type="HOGENOM" id="CLU_107531_2_1_9"/>
<dbReference type="Proteomes" id="UP000001170">
    <property type="component" value="Chromosome"/>
</dbReference>
<dbReference type="GO" id="GO:0005506">
    <property type="term" value="F:iron ion binding"/>
    <property type="evidence" value="ECO:0007669"/>
    <property type="project" value="InterPro"/>
</dbReference>
<dbReference type="GO" id="GO:0043768">
    <property type="term" value="F:S-ribosylhomocysteine lyase activity"/>
    <property type="evidence" value="ECO:0007669"/>
    <property type="project" value="UniProtKB-UniRule"/>
</dbReference>
<dbReference type="GO" id="GO:0009372">
    <property type="term" value="P:quorum sensing"/>
    <property type="evidence" value="ECO:0007669"/>
    <property type="project" value="UniProtKB-UniRule"/>
</dbReference>
<dbReference type="Gene3D" id="3.30.1360.80">
    <property type="entry name" value="S-ribosylhomocysteinase (LuxS)"/>
    <property type="match status" value="1"/>
</dbReference>
<dbReference type="HAMAP" id="MF_00091">
    <property type="entry name" value="LuxS"/>
    <property type="match status" value="1"/>
</dbReference>
<dbReference type="InterPro" id="IPR037005">
    <property type="entry name" value="LuxS_sf"/>
</dbReference>
<dbReference type="InterPro" id="IPR011249">
    <property type="entry name" value="Metalloenz_LuxS/M16"/>
</dbReference>
<dbReference type="InterPro" id="IPR003815">
    <property type="entry name" value="S-ribosylhomocysteinase"/>
</dbReference>
<dbReference type="NCBIfam" id="NF002607">
    <property type="entry name" value="PRK02260.2-5"/>
    <property type="match status" value="1"/>
</dbReference>
<dbReference type="NCBIfam" id="NF002608">
    <property type="entry name" value="PRK02260.3-1"/>
    <property type="match status" value="1"/>
</dbReference>
<dbReference type="PANTHER" id="PTHR35799">
    <property type="entry name" value="S-RIBOSYLHOMOCYSTEINE LYASE"/>
    <property type="match status" value="1"/>
</dbReference>
<dbReference type="PANTHER" id="PTHR35799:SF1">
    <property type="entry name" value="S-RIBOSYLHOMOCYSTEINE LYASE"/>
    <property type="match status" value="1"/>
</dbReference>
<dbReference type="Pfam" id="PF02664">
    <property type="entry name" value="LuxS"/>
    <property type="match status" value="1"/>
</dbReference>
<dbReference type="PIRSF" id="PIRSF006160">
    <property type="entry name" value="AI2"/>
    <property type="match status" value="1"/>
</dbReference>
<dbReference type="PRINTS" id="PR01487">
    <property type="entry name" value="LUXSPROTEIN"/>
</dbReference>
<dbReference type="SUPFAM" id="SSF63411">
    <property type="entry name" value="LuxS/MPP-like metallohydrolase"/>
    <property type="match status" value="1"/>
</dbReference>
<proteinExistence type="inferred from homology"/>
<reference key="1">
    <citation type="journal article" date="2004" name="Nat. Biotechnol.">
        <title>Complete sequence and comparative genome analysis of the dairy bacterium Streptococcus thermophilus.</title>
        <authorList>
            <person name="Bolotin A."/>
            <person name="Quinquis B."/>
            <person name="Renault P."/>
            <person name="Sorokin A."/>
            <person name="Ehrlich S.D."/>
            <person name="Kulakauskas S."/>
            <person name="Lapidus A."/>
            <person name="Goltsman E."/>
            <person name="Mazur M."/>
            <person name="Pusch G.D."/>
            <person name="Fonstein M."/>
            <person name="Overbeek R."/>
            <person name="Kyprides N."/>
            <person name="Purnelle B."/>
            <person name="Prozzi D."/>
            <person name="Ngui K."/>
            <person name="Masuy D."/>
            <person name="Hancy F."/>
            <person name="Burteau S."/>
            <person name="Boutry M."/>
            <person name="Delcour J."/>
            <person name="Goffeau A."/>
            <person name="Hols P."/>
        </authorList>
    </citation>
    <scope>NUCLEOTIDE SEQUENCE [LARGE SCALE GENOMIC DNA]</scope>
    <source>
        <strain>ATCC BAA-250 / LMG 18311</strain>
    </source>
</reference>